<gene>
    <name evidence="2" type="primary">mnd1</name>
    <name type="ORF">zgc:101017</name>
</gene>
<organism>
    <name type="scientific">Danio rerio</name>
    <name type="common">Zebrafish</name>
    <name type="synonym">Brachydanio rerio</name>
    <dbReference type="NCBI Taxonomy" id="7955"/>
    <lineage>
        <taxon>Eukaryota</taxon>
        <taxon>Metazoa</taxon>
        <taxon>Chordata</taxon>
        <taxon>Craniata</taxon>
        <taxon>Vertebrata</taxon>
        <taxon>Euteleostomi</taxon>
        <taxon>Actinopterygii</taxon>
        <taxon>Neopterygii</taxon>
        <taxon>Teleostei</taxon>
        <taxon>Ostariophysi</taxon>
        <taxon>Cypriniformes</taxon>
        <taxon>Danionidae</taxon>
        <taxon>Danioninae</taxon>
        <taxon>Danio</taxon>
    </lineage>
</organism>
<accession>Q6DC61</accession>
<keyword id="KW-0175">Coiled coil</keyword>
<keyword id="KW-0233">DNA recombination</keyword>
<keyword id="KW-0469">Meiosis</keyword>
<keyword id="KW-0539">Nucleus</keyword>
<keyword id="KW-1185">Reference proteome</keyword>
<dbReference type="EMBL" id="BC078223">
    <property type="protein sequence ID" value="AAH78223.1"/>
    <property type="molecule type" value="mRNA"/>
</dbReference>
<dbReference type="RefSeq" id="NP_001003597.1">
    <property type="nucleotide sequence ID" value="NM_001003597.2"/>
</dbReference>
<dbReference type="SMR" id="Q6DC61"/>
<dbReference type="FunCoup" id="Q6DC61">
    <property type="interactions" value="960"/>
</dbReference>
<dbReference type="STRING" id="7955.ENSDARP00000054264"/>
<dbReference type="PaxDb" id="7955-ENSDARP00000054264"/>
<dbReference type="Ensembl" id="ENSDART00000054265">
    <property type="protein sequence ID" value="ENSDARP00000054264"/>
    <property type="gene ID" value="ENSDARG00000074451"/>
</dbReference>
<dbReference type="GeneID" id="445203"/>
<dbReference type="KEGG" id="dre:445203"/>
<dbReference type="AGR" id="ZFIN:ZDB-GENE-040801-116"/>
<dbReference type="CTD" id="84057"/>
<dbReference type="ZFIN" id="ZDB-GENE-040801-116">
    <property type="gene designation" value="mnd1"/>
</dbReference>
<dbReference type="eggNOG" id="KOG3433">
    <property type="taxonomic scope" value="Eukaryota"/>
</dbReference>
<dbReference type="InParanoid" id="Q6DC61"/>
<dbReference type="OrthoDB" id="273345at2759"/>
<dbReference type="PhylomeDB" id="Q6DC61"/>
<dbReference type="TreeFam" id="TF314068"/>
<dbReference type="PRO" id="PR:Q6DC61"/>
<dbReference type="Proteomes" id="UP000000437">
    <property type="component" value="Chromosome 1"/>
</dbReference>
<dbReference type="Bgee" id="ENSDARG00000074451">
    <property type="expression patterns" value="Expressed in testis and 21 other cell types or tissues"/>
</dbReference>
<dbReference type="ExpressionAtlas" id="Q6DC61">
    <property type="expression patterns" value="baseline and differential"/>
</dbReference>
<dbReference type="GO" id="GO:0005634">
    <property type="term" value="C:nucleus"/>
    <property type="evidence" value="ECO:0007669"/>
    <property type="project" value="UniProtKB-SubCell"/>
</dbReference>
<dbReference type="GO" id="GO:0003690">
    <property type="term" value="F:double-stranded DNA binding"/>
    <property type="evidence" value="ECO:0007669"/>
    <property type="project" value="InterPro"/>
</dbReference>
<dbReference type="GO" id="GO:0007131">
    <property type="term" value="P:reciprocal meiotic recombination"/>
    <property type="evidence" value="ECO:0000318"/>
    <property type="project" value="GO_Central"/>
</dbReference>
<dbReference type="InterPro" id="IPR005647">
    <property type="entry name" value="Mnd1"/>
</dbReference>
<dbReference type="InterPro" id="IPR040453">
    <property type="entry name" value="Mnd1_HTH"/>
</dbReference>
<dbReference type="InterPro" id="IPR036390">
    <property type="entry name" value="WH_DNA-bd_sf"/>
</dbReference>
<dbReference type="PANTHER" id="PTHR31398">
    <property type="entry name" value="MEIOTIC NUCLEAR DIVISION PROTEIN 1 HOMOLOG"/>
    <property type="match status" value="1"/>
</dbReference>
<dbReference type="PANTHER" id="PTHR31398:SF0">
    <property type="entry name" value="MEIOTIC NUCLEAR DIVISION PROTEIN 1 HOMOLOG"/>
    <property type="match status" value="1"/>
</dbReference>
<dbReference type="Pfam" id="PF03962">
    <property type="entry name" value="Mnd1"/>
    <property type="match status" value="1"/>
</dbReference>
<dbReference type="PIRSF" id="PIRSF026991">
    <property type="entry name" value="Mnd1"/>
    <property type="match status" value="1"/>
</dbReference>
<dbReference type="SUPFAM" id="SSF46785">
    <property type="entry name" value="Winged helix' DNA-binding domain"/>
    <property type="match status" value="1"/>
</dbReference>
<reference evidence="5" key="1">
    <citation type="submission" date="2004-07" db="EMBL/GenBank/DDBJ databases">
        <authorList>
            <consortium name="NIH - Zebrafish Gene Collection (ZGC) project"/>
        </authorList>
    </citation>
    <scope>NUCLEOTIDE SEQUENCE [LARGE SCALE MRNA]</scope>
    <source>
        <tissue evidence="5">Embryo</tissue>
    </source>
</reference>
<proteinExistence type="evidence at transcript level"/>
<evidence type="ECO:0000250" key="1">
    <source>
        <dbReference type="UniProtKB" id="Q8K396"/>
    </source>
</evidence>
<evidence type="ECO:0000250" key="2">
    <source>
        <dbReference type="UniProtKB" id="Q9BWT6"/>
    </source>
</evidence>
<evidence type="ECO:0000255" key="3"/>
<evidence type="ECO:0000305" key="4"/>
<evidence type="ECO:0000312" key="5">
    <source>
        <dbReference type="EMBL" id="AAH78223.1"/>
    </source>
</evidence>
<comment type="function">
    <text evidence="1">Required for proper homologous chromosome pairing and efficient cross-over and intragenic recombination during meiosis. Stimulates both DMC1- and RAD51-mediated homologous strand assimilation, which is required for the resolution of meiotic double-strand breaks (By similarity).</text>
</comment>
<comment type="subcellular location">
    <subcellularLocation>
        <location evidence="4">Nucleus</location>
    </subcellularLocation>
</comment>
<comment type="similarity">
    <text evidence="4">Belongs to the MND1 family.</text>
</comment>
<name>MND1_DANRE</name>
<sequence>MSKKKGLSLEEKRSRMMEIFFETKDVFQLKDIEKIAPKSKGITPMSVKEVLQSLVDDNMVDTERVGTSNYYWAFPSKALHARKRRLEELEKQLEDGSQRKKALQQAVDKAKVGREVNEEREDLLKELTALKGQRDQMKVEIEKYQECDPAVVEEIRNANIAAKEAVARWTGGTFGNYLISYLLTCSLTRQEPWAHHLSPSSGFSPGTACQTCYYYQQAIS</sequence>
<protein>
    <recommendedName>
        <fullName>Meiotic nuclear division protein 1 homolog</fullName>
    </recommendedName>
</protein>
<feature type="chain" id="PRO_0000318083" description="Meiotic nuclear division protein 1 homolog">
    <location>
        <begin position="1"/>
        <end position="220"/>
    </location>
</feature>
<feature type="coiled-coil region" evidence="3">
    <location>
        <begin position="76"/>
        <end position="147"/>
    </location>
</feature>